<organism>
    <name type="scientific">Vibrio vulnificus (strain CMCP6)</name>
    <dbReference type="NCBI Taxonomy" id="216895"/>
    <lineage>
        <taxon>Bacteria</taxon>
        <taxon>Pseudomonadati</taxon>
        <taxon>Pseudomonadota</taxon>
        <taxon>Gammaproteobacteria</taxon>
        <taxon>Vibrionales</taxon>
        <taxon>Vibrionaceae</taxon>
        <taxon>Vibrio</taxon>
    </lineage>
</organism>
<gene>
    <name evidence="1" type="primary">rplW</name>
    <name type="ordered locus">VV1_0760</name>
</gene>
<comment type="function">
    <text evidence="1">One of the early assembly proteins it binds 23S rRNA. One of the proteins that surrounds the polypeptide exit tunnel on the outside of the ribosome. Forms the main docking site for trigger factor binding to the ribosome.</text>
</comment>
<comment type="subunit">
    <text evidence="1">Part of the 50S ribosomal subunit. Contacts protein L29, and trigger factor when it is bound to the ribosome.</text>
</comment>
<comment type="similarity">
    <text evidence="1">Belongs to the universal ribosomal protein uL23 family.</text>
</comment>
<name>RL23_VIBVU</name>
<evidence type="ECO:0000255" key="1">
    <source>
        <dbReference type="HAMAP-Rule" id="MF_01369"/>
    </source>
</evidence>
<evidence type="ECO:0000305" key="2"/>
<feature type="chain" id="PRO_0000272871" description="Large ribosomal subunit protein uL23">
    <location>
        <begin position="1"/>
        <end position="100"/>
    </location>
</feature>
<sequence length="100" mass="11127">MITQERLLKVLRAPHISEKATMAAEKANTIVFKVAKDATKKEIKAAVEQLFEVEVKSVNTLITKGKTKRQGLRQGRRSDVKKAYVTLKEGQDLDFVGGAE</sequence>
<proteinExistence type="inferred from homology"/>
<dbReference type="EMBL" id="AE016795">
    <property type="protein sequence ID" value="AAO09268.1"/>
    <property type="molecule type" value="Genomic_DNA"/>
</dbReference>
<dbReference type="RefSeq" id="WP_011078829.1">
    <property type="nucleotide sequence ID" value="NC_004459.3"/>
</dbReference>
<dbReference type="SMR" id="Q8DE41"/>
<dbReference type="GeneID" id="93895064"/>
<dbReference type="KEGG" id="vvu:VV1_0760"/>
<dbReference type="HOGENOM" id="CLU_037562_3_1_6"/>
<dbReference type="Proteomes" id="UP000002275">
    <property type="component" value="Chromosome 1"/>
</dbReference>
<dbReference type="GO" id="GO:1990904">
    <property type="term" value="C:ribonucleoprotein complex"/>
    <property type="evidence" value="ECO:0007669"/>
    <property type="project" value="UniProtKB-KW"/>
</dbReference>
<dbReference type="GO" id="GO:0005840">
    <property type="term" value="C:ribosome"/>
    <property type="evidence" value="ECO:0007669"/>
    <property type="project" value="UniProtKB-KW"/>
</dbReference>
<dbReference type="GO" id="GO:0019843">
    <property type="term" value="F:rRNA binding"/>
    <property type="evidence" value="ECO:0007669"/>
    <property type="project" value="UniProtKB-UniRule"/>
</dbReference>
<dbReference type="GO" id="GO:0003735">
    <property type="term" value="F:structural constituent of ribosome"/>
    <property type="evidence" value="ECO:0007669"/>
    <property type="project" value="InterPro"/>
</dbReference>
<dbReference type="GO" id="GO:0006412">
    <property type="term" value="P:translation"/>
    <property type="evidence" value="ECO:0007669"/>
    <property type="project" value="UniProtKB-UniRule"/>
</dbReference>
<dbReference type="FunFam" id="3.30.70.330:FF:000001">
    <property type="entry name" value="50S ribosomal protein L23"/>
    <property type="match status" value="1"/>
</dbReference>
<dbReference type="Gene3D" id="3.30.70.330">
    <property type="match status" value="1"/>
</dbReference>
<dbReference type="HAMAP" id="MF_01369_B">
    <property type="entry name" value="Ribosomal_uL23_B"/>
    <property type="match status" value="1"/>
</dbReference>
<dbReference type="InterPro" id="IPR012677">
    <property type="entry name" value="Nucleotide-bd_a/b_plait_sf"/>
</dbReference>
<dbReference type="InterPro" id="IPR013025">
    <property type="entry name" value="Ribosomal_uL23-like"/>
</dbReference>
<dbReference type="InterPro" id="IPR012678">
    <property type="entry name" value="Ribosomal_uL23/eL15/eS24_sf"/>
</dbReference>
<dbReference type="InterPro" id="IPR001014">
    <property type="entry name" value="Ribosomal_uL23_CS"/>
</dbReference>
<dbReference type="NCBIfam" id="NF004358">
    <property type="entry name" value="PRK05738.1-1"/>
    <property type="match status" value="1"/>
</dbReference>
<dbReference type="NCBIfam" id="NF004359">
    <property type="entry name" value="PRK05738.1-3"/>
    <property type="match status" value="1"/>
</dbReference>
<dbReference type="NCBIfam" id="NF004360">
    <property type="entry name" value="PRK05738.1-5"/>
    <property type="match status" value="1"/>
</dbReference>
<dbReference type="NCBIfam" id="NF004363">
    <property type="entry name" value="PRK05738.2-4"/>
    <property type="match status" value="1"/>
</dbReference>
<dbReference type="PANTHER" id="PTHR11620">
    <property type="entry name" value="60S RIBOSOMAL PROTEIN L23A"/>
    <property type="match status" value="1"/>
</dbReference>
<dbReference type="Pfam" id="PF00276">
    <property type="entry name" value="Ribosomal_L23"/>
    <property type="match status" value="1"/>
</dbReference>
<dbReference type="SUPFAM" id="SSF54189">
    <property type="entry name" value="Ribosomal proteins S24e, L23 and L15e"/>
    <property type="match status" value="1"/>
</dbReference>
<dbReference type="PROSITE" id="PS00050">
    <property type="entry name" value="RIBOSOMAL_L23"/>
    <property type="match status" value="1"/>
</dbReference>
<protein>
    <recommendedName>
        <fullName evidence="1">Large ribosomal subunit protein uL23</fullName>
    </recommendedName>
    <alternativeName>
        <fullName evidence="2">50S ribosomal protein L23</fullName>
    </alternativeName>
</protein>
<accession>Q8DE41</accession>
<keyword id="KW-0687">Ribonucleoprotein</keyword>
<keyword id="KW-0689">Ribosomal protein</keyword>
<keyword id="KW-0694">RNA-binding</keyword>
<keyword id="KW-0699">rRNA-binding</keyword>
<reference key="1">
    <citation type="submission" date="2002-12" db="EMBL/GenBank/DDBJ databases">
        <title>Complete genome sequence of Vibrio vulnificus CMCP6.</title>
        <authorList>
            <person name="Rhee J.H."/>
            <person name="Kim S.Y."/>
            <person name="Chung S.S."/>
            <person name="Kim J.J."/>
            <person name="Moon Y.H."/>
            <person name="Jeong H."/>
            <person name="Choy H.E."/>
        </authorList>
    </citation>
    <scope>NUCLEOTIDE SEQUENCE [LARGE SCALE GENOMIC DNA]</scope>
    <source>
        <strain>CMCP6</strain>
    </source>
</reference>